<gene>
    <name type="primary">UBA52</name>
</gene>
<reference key="1">
    <citation type="journal article" date="2011" name="Nature">
        <title>A high-resolution map of human evolutionary constraint using 29 mammals.</title>
        <authorList>
            <person name="Lindblad-Toh K."/>
            <person name="Garber M."/>
            <person name="Zuk O."/>
            <person name="Lin M.F."/>
            <person name="Parker B.J."/>
            <person name="Washietl S."/>
            <person name="Kheradpour P."/>
            <person name="Ernst J."/>
            <person name="Jordan G."/>
            <person name="Mauceli E."/>
            <person name="Ward L.D."/>
            <person name="Lowe C.B."/>
            <person name="Holloway A.K."/>
            <person name="Clamp M."/>
            <person name="Gnerre S."/>
            <person name="Alfoldi J."/>
            <person name="Beal K."/>
            <person name="Chang J."/>
            <person name="Clawson H."/>
            <person name="Cuff J."/>
            <person name="Di Palma F."/>
            <person name="Fitzgerald S."/>
            <person name="Flicek P."/>
            <person name="Guttman M."/>
            <person name="Hubisz M.J."/>
            <person name="Jaffe D.B."/>
            <person name="Jungreis I."/>
            <person name="Kent W.J."/>
            <person name="Kostka D."/>
            <person name="Lara M."/>
            <person name="Martins A.L."/>
            <person name="Massingham T."/>
            <person name="Moltke I."/>
            <person name="Raney B.J."/>
            <person name="Rasmussen M.D."/>
            <person name="Robinson J."/>
            <person name="Stark A."/>
            <person name="Vilella A.J."/>
            <person name="Wen J."/>
            <person name="Xie X."/>
            <person name="Zody M.C."/>
            <person name="Baldwin J."/>
            <person name="Bloom T."/>
            <person name="Chin C.W."/>
            <person name="Heiman D."/>
            <person name="Nicol R."/>
            <person name="Nusbaum C."/>
            <person name="Young S."/>
            <person name="Wilkinson J."/>
            <person name="Worley K.C."/>
            <person name="Kovar C.L."/>
            <person name="Muzny D.M."/>
            <person name="Gibbs R.A."/>
            <person name="Cree A."/>
            <person name="Dihn H.H."/>
            <person name="Fowler G."/>
            <person name="Jhangiani S."/>
            <person name="Joshi V."/>
            <person name="Lee S."/>
            <person name="Lewis L.R."/>
            <person name="Nazareth L.V."/>
            <person name="Okwuonu G."/>
            <person name="Santibanez J."/>
            <person name="Warren W.C."/>
            <person name="Mardis E.R."/>
            <person name="Weinstock G.M."/>
            <person name="Wilson R.K."/>
            <person name="Delehaunty K."/>
            <person name="Dooling D."/>
            <person name="Fronik C."/>
            <person name="Fulton L."/>
            <person name="Fulton B."/>
            <person name="Graves T."/>
            <person name="Minx P."/>
            <person name="Sodergren E."/>
            <person name="Birney E."/>
            <person name="Margulies E.H."/>
            <person name="Herrero J."/>
            <person name="Green E.D."/>
            <person name="Haussler D."/>
            <person name="Siepel A."/>
            <person name="Goldman N."/>
            <person name="Pollard K.S."/>
            <person name="Pedersen J.S."/>
            <person name="Lander E.S."/>
            <person name="Kellis M."/>
        </authorList>
    </citation>
    <scope>NUCLEOTIDE SEQUENCE [LARGE SCALE GENOMIC DNA]</scope>
    <source>
        <strain>Thorbecke</strain>
    </source>
</reference>
<reference evidence="8 9" key="2">
    <citation type="journal article" date="2022" name="Science">
        <title>Structure of the mammalian ribosome as it decodes the selenocysteine UGA codon.</title>
        <authorList>
            <person name="Hilal T."/>
            <person name="Killam B.Y."/>
            <person name="Grozdanovic M."/>
            <person name="Dobosz-Bartoszek M."/>
            <person name="Loerke J."/>
            <person name="Buerger J."/>
            <person name="Mielke T."/>
            <person name="Copeland P.R."/>
            <person name="Simonovic M."/>
            <person name="Spahn C.M.T."/>
        </authorList>
    </citation>
    <scope>STRUCTURE BY ELECTRON MICROSCOPY (2.80 ANGSTROMS) OF 77-128 IN COMPLEX WITH RIBOSOME</scope>
    <scope>SUBCELLULAR LOCATION</scope>
    <scope>SUBUNIT</scope>
</reference>
<reference evidence="7" key="3">
    <citation type="journal article" date="2023" name="Nature">
        <title>A molecular network of conserved factors keeps ribosomes dormant in the egg.</title>
        <authorList>
            <person name="Leesch F."/>
            <person name="Lorenzo-Orts L."/>
            <person name="Pribitzer C."/>
            <person name="Grishkovskaya I."/>
            <person name="Roehsner J."/>
            <person name="Chugunova A."/>
            <person name="Matzinger M."/>
            <person name="Roitinger E."/>
            <person name="Belacic K."/>
            <person name="Kandolf S."/>
            <person name="Lin T.Y."/>
            <person name="Mechtler K."/>
            <person name="Meinhart A."/>
            <person name="Haselbach D."/>
            <person name="Pauli A."/>
        </authorList>
    </citation>
    <scope>STRUCTURE BY ELECTRON MICROSCOPY (2.30 ANGSTROMS) OF 77-128 IN COMPLEX WITH RIBOSOME</scope>
    <scope>SUBCELLULAR LOCATION</scope>
    <scope>SUBUNIT</scope>
</reference>
<dbReference type="EMBL" id="VIYN02000755">
    <property type="status" value="NOT_ANNOTATED_CDS"/>
    <property type="molecule type" value="Genomic_DNA"/>
</dbReference>
<dbReference type="RefSeq" id="XP_051697560.1">
    <property type="nucleotide sequence ID" value="XM_051841600.2"/>
</dbReference>
<dbReference type="PDB" id="7OYD">
    <property type="method" value="EM"/>
    <property type="resolution" value="2.30 A"/>
    <property type="chains" value="m=1-128"/>
</dbReference>
<dbReference type="PDB" id="7ZJW">
    <property type="method" value="EM"/>
    <property type="resolution" value="2.80 A"/>
    <property type="chains" value="Lp=1-128"/>
</dbReference>
<dbReference type="PDB" id="7ZJX">
    <property type="method" value="EM"/>
    <property type="resolution" value="3.10 A"/>
    <property type="chains" value="Lp=1-128"/>
</dbReference>
<dbReference type="PDB" id="8B5L">
    <property type="method" value="EM"/>
    <property type="resolution" value="2.86 A"/>
    <property type="chains" value="m=77-128"/>
</dbReference>
<dbReference type="PDB" id="8B6C">
    <property type="method" value="EM"/>
    <property type="resolution" value="2.79 A"/>
    <property type="chains" value="m=77-128"/>
</dbReference>
<dbReference type="PDB" id="8RJB">
    <property type="method" value="EM"/>
    <property type="resolution" value="2.69 A"/>
    <property type="chains" value="m=36-128"/>
</dbReference>
<dbReference type="PDB" id="8RJC">
    <property type="method" value="EM"/>
    <property type="resolution" value="2.90 A"/>
    <property type="chains" value="m=36-128"/>
</dbReference>
<dbReference type="PDB" id="8RJD">
    <property type="method" value="EM"/>
    <property type="resolution" value="2.79 A"/>
    <property type="chains" value="m=36-128"/>
</dbReference>
<dbReference type="PDB" id="9BDL">
    <property type="method" value="EM"/>
    <property type="resolution" value="2.80 A"/>
    <property type="chains" value="AL40=77-128"/>
</dbReference>
<dbReference type="PDB" id="9BDN">
    <property type="method" value="EM"/>
    <property type="resolution" value="3.10 A"/>
    <property type="chains" value="AL40=77-128"/>
</dbReference>
<dbReference type="PDB" id="9BDP">
    <property type="method" value="EM"/>
    <property type="resolution" value="3.70 A"/>
    <property type="chains" value="AL40=77-128"/>
</dbReference>
<dbReference type="PDB" id="9F1B">
    <property type="method" value="EM"/>
    <property type="resolution" value="3.01 A"/>
    <property type="chains" value="Bm=1-128"/>
</dbReference>
<dbReference type="PDB" id="9F1C">
    <property type="method" value="EM"/>
    <property type="resolution" value="3.78 A"/>
    <property type="chains" value="Bm=1-128"/>
</dbReference>
<dbReference type="PDB" id="9F1D">
    <property type="method" value="EM"/>
    <property type="resolution" value="3.26 A"/>
    <property type="chains" value="Bm=1-128"/>
</dbReference>
<dbReference type="PDBsum" id="7OYD"/>
<dbReference type="PDBsum" id="7ZJW"/>
<dbReference type="PDBsum" id="7ZJX"/>
<dbReference type="PDBsum" id="8B5L"/>
<dbReference type="PDBsum" id="8B6C"/>
<dbReference type="PDBsum" id="8RJB"/>
<dbReference type="PDBsum" id="8RJC"/>
<dbReference type="PDBsum" id="8RJD"/>
<dbReference type="PDBsum" id="9BDL"/>
<dbReference type="PDBsum" id="9BDN"/>
<dbReference type="PDBsum" id="9BDP"/>
<dbReference type="PDBsum" id="9F1B"/>
<dbReference type="PDBsum" id="9F1C"/>
<dbReference type="PDBsum" id="9F1D"/>
<dbReference type="EMDB" id="EMD-0192"/>
<dbReference type="EMDB" id="EMD-0194"/>
<dbReference type="EMDB" id="EMD-0195"/>
<dbReference type="EMDB" id="EMD-0197"/>
<dbReference type="EMDB" id="EMD-10181"/>
<dbReference type="EMDB" id="EMD-10380"/>
<dbReference type="EMDB" id="EMD-13114"/>
<dbReference type="EMDB" id="EMD-15860"/>
<dbReference type="EMDB" id="EMD-15863"/>
<dbReference type="EMDB" id="EMD-16155"/>
<dbReference type="EMDB" id="EMD-19195"/>
<dbReference type="EMDB" id="EMD-19197"/>
<dbReference type="EMDB" id="EMD-19198"/>
<dbReference type="EMDB" id="EMD-23785"/>
<dbReference type="EMDB" id="EMD-25994"/>
<dbReference type="EMDB" id="EMD-4130"/>
<dbReference type="EMDB" id="EMD-4131"/>
<dbReference type="EMDB" id="EMD-4132"/>
<dbReference type="EMDB" id="EMD-4133"/>
<dbReference type="EMDB" id="EMD-4134"/>
<dbReference type="EMDB" id="EMD-4135"/>
<dbReference type="EMDB" id="EMD-4136"/>
<dbReference type="EMDB" id="EMD-4137"/>
<dbReference type="EMDB" id="EMD-44461"/>
<dbReference type="EMDB" id="EMD-44463"/>
<dbReference type="EMDB" id="EMD-44464"/>
<dbReference type="EMDB" id="EMD-50124"/>
<dbReference type="EMDB" id="EMD-50125"/>
<dbReference type="EMDB" id="EMD-50126"/>
<dbReference type="SMR" id="P0DXC2"/>
<dbReference type="GeneID" id="127489798"/>
<dbReference type="Proteomes" id="UP000001811">
    <property type="component" value="Unplaced"/>
</dbReference>
<dbReference type="GO" id="GO:0005737">
    <property type="term" value="C:cytoplasm"/>
    <property type="evidence" value="ECO:0007669"/>
    <property type="project" value="UniProtKB-SubCell"/>
</dbReference>
<dbReference type="GO" id="GO:0005634">
    <property type="term" value="C:nucleus"/>
    <property type="evidence" value="ECO:0007669"/>
    <property type="project" value="UniProtKB-SubCell"/>
</dbReference>
<dbReference type="GO" id="GO:1990904">
    <property type="term" value="C:ribonucleoprotein complex"/>
    <property type="evidence" value="ECO:0007669"/>
    <property type="project" value="UniProtKB-KW"/>
</dbReference>
<dbReference type="GO" id="GO:0005840">
    <property type="term" value="C:ribosome"/>
    <property type="evidence" value="ECO:0007669"/>
    <property type="project" value="UniProtKB-KW"/>
</dbReference>
<dbReference type="GO" id="GO:0003735">
    <property type="term" value="F:structural constituent of ribosome"/>
    <property type="evidence" value="ECO:0007669"/>
    <property type="project" value="InterPro"/>
</dbReference>
<dbReference type="GO" id="GO:0006412">
    <property type="term" value="P:translation"/>
    <property type="evidence" value="ECO:0007669"/>
    <property type="project" value="InterPro"/>
</dbReference>
<dbReference type="CDD" id="cd01803">
    <property type="entry name" value="Ubl_ubiquitin"/>
    <property type="match status" value="1"/>
</dbReference>
<dbReference type="FunFam" id="3.10.20.90:FF:000014">
    <property type="entry name" value="Ubiquitin-60S ribosomal L40 fusion"/>
    <property type="match status" value="1"/>
</dbReference>
<dbReference type="FunFam" id="4.10.1060.50:FF:000001">
    <property type="entry name" value="ubiquitin-60S ribosomal protein L40"/>
    <property type="match status" value="1"/>
</dbReference>
<dbReference type="Gene3D" id="4.10.1060.50">
    <property type="match status" value="1"/>
</dbReference>
<dbReference type="Gene3D" id="3.10.20.90">
    <property type="entry name" value="Phosphatidylinositol 3-kinase Catalytic Subunit, Chain A, domain 1"/>
    <property type="match status" value="1"/>
</dbReference>
<dbReference type="InterPro" id="IPR001975">
    <property type="entry name" value="Ribosomal_eL40_dom"/>
</dbReference>
<dbReference type="InterPro" id="IPR038587">
    <property type="entry name" value="Ribosomal_eL40_sf"/>
</dbReference>
<dbReference type="InterPro" id="IPR000626">
    <property type="entry name" value="Ubiquitin-like_dom"/>
</dbReference>
<dbReference type="InterPro" id="IPR029071">
    <property type="entry name" value="Ubiquitin-like_domsf"/>
</dbReference>
<dbReference type="InterPro" id="IPR019954">
    <property type="entry name" value="Ubiquitin_CS"/>
</dbReference>
<dbReference type="InterPro" id="IPR019956">
    <property type="entry name" value="Ubiquitin_dom"/>
</dbReference>
<dbReference type="InterPro" id="IPR050158">
    <property type="entry name" value="Ubiquitin_ubiquitin-like"/>
</dbReference>
<dbReference type="PANTHER" id="PTHR10666">
    <property type="entry name" value="UBIQUITIN"/>
    <property type="match status" value="1"/>
</dbReference>
<dbReference type="Pfam" id="PF01020">
    <property type="entry name" value="Ribosomal_L40e"/>
    <property type="match status" value="1"/>
</dbReference>
<dbReference type="Pfam" id="PF00240">
    <property type="entry name" value="ubiquitin"/>
    <property type="match status" value="1"/>
</dbReference>
<dbReference type="PRINTS" id="PR00348">
    <property type="entry name" value="UBIQUITIN"/>
</dbReference>
<dbReference type="SMART" id="SM01377">
    <property type="entry name" value="Ribosomal_L40e"/>
    <property type="match status" value="1"/>
</dbReference>
<dbReference type="SMART" id="SM00213">
    <property type="entry name" value="UBQ"/>
    <property type="match status" value="1"/>
</dbReference>
<dbReference type="SUPFAM" id="SSF54236">
    <property type="entry name" value="Ubiquitin-like"/>
    <property type="match status" value="1"/>
</dbReference>
<dbReference type="PROSITE" id="PS00299">
    <property type="entry name" value="UBIQUITIN_1"/>
    <property type="match status" value="1"/>
</dbReference>
<dbReference type="PROSITE" id="PS50053">
    <property type="entry name" value="UBIQUITIN_2"/>
    <property type="match status" value="1"/>
</dbReference>
<accession>P0DXC2</accession>
<sequence>MQIFVKTLTGKTITLEVEPSDTIENVKAKIQDKEGIPPDQQRLIFAGKQLEDGRTLSDYNIQKESTLHLVLRLRGGIIEPSLRQLAQKYNCDKMICRKCYARLHPRAVNCRKKKCGHTNNLRPKKKVK</sequence>
<evidence type="ECO:0000250" key="1">
    <source>
        <dbReference type="UniProtKB" id="P62986"/>
    </source>
</evidence>
<evidence type="ECO:0000250" key="2">
    <source>
        <dbReference type="UniProtKB" id="P62987"/>
    </source>
</evidence>
<evidence type="ECO:0000255" key="3">
    <source>
        <dbReference type="PROSITE-ProRule" id="PRU00214"/>
    </source>
</evidence>
<evidence type="ECO:0000269" key="4">
    <source>
    </source>
</evidence>
<evidence type="ECO:0000269" key="5">
    <source>
    </source>
</evidence>
<evidence type="ECO:0000305" key="6"/>
<evidence type="ECO:0007744" key="7">
    <source>
        <dbReference type="PDB" id="7OYD"/>
    </source>
</evidence>
<evidence type="ECO:0007744" key="8">
    <source>
        <dbReference type="PDB" id="7ZJW"/>
    </source>
</evidence>
<evidence type="ECO:0007744" key="9">
    <source>
        <dbReference type="PDB" id="7ZJX"/>
    </source>
</evidence>
<protein>
    <recommendedName>
        <fullName>Ubiquitin-ribosomal protein eL40 fusion protein</fullName>
    </recommendedName>
    <alternativeName>
        <fullName>Ubiquitin A-52 residue ribosomal protein fusion product 1</fullName>
    </alternativeName>
    <component>
        <recommendedName>
            <fullName>Ubiquitin</fullName>
        </recommendedName>
    </component>
    <component>
        <recommendedName>
            <fullName>Large ribosomal subunit protein eL40</fullName>
        </recommendedName>
        <alternativeName>
            <fullName>60S ribosomal protein L40</fullName>
        </alternativeName>
    </component>
</protein>
<organism>
    <name type="scientific">Oryctolagus cuniculus</name>
    <name type="common">Rabbit</name>
    <dbReference type="NCBI Taxonomy" id="9986"/>
    <lineage>
        <taxon>Eukaryota</taxon>
        <taxon>Metazoa</taxon>
        <taxon>Chordata</taxon>
        <taxon>Craniata</taxon>
        <taxon>Vertebrata</taxon>
        <taxon>Euteleostomi</taxon>
        <taxon>Mammalia</taxon>
        <taxon>Eutheria</taxon>
        <taxon>Euarchontoglires</taxon>
        <taxon>Glires</taxon>
        <taxon>Lagomorpha</taxon>
        <taxon>Leporidae</taxon>
        <taxon>Oryctolagus</taxon>
    </lineage>
</organism>
<name>RL40_RABIT</name>
<feature type="chain" id="PRO_0000460132" description="Ubiquitin-ribosomal protein eL40 fusion protein">
    <location>
        <begin position="1"/>
        <end position="128"/>
    </location>
</feature>
<feature type="chain" id="PRO_0000460133" description="Ubiquitin" evidence="2">
    <location>
        <begin position="1"/>
        <end position="76"/>
    </location>
</feature>
<feature type="chain" id="PRO_0000460134" description="Large ribosomal subunit protein eL40" evidence="2">
    <location>
        <begin position="77"/>
        <end position="128"/>
    </location>
</feature>
<feature type="domain" description="Ubiquitin-like" evidence="3">
    <location>
        <begin position="1"/>
        <end position="76"/>
    </location>
</feature>
<feature type="site" description="Interacts with activating enzyme" evidence="2">
    <location>
        <position position="54"/>
    </location>
</feature>
<feature type="site" description="Essential for function" evidence="2">
    <location>
        <position position="68"/>
    </location>
</feature>
<feature type="site" description="Interacts with activating enzyme" evidence="2">
    <location>
        <position position="72"/>
    </location>
</feature>
<feature type="modified residue" description="Phosphoserine" evidence="2">
    <location>
        <position position="65"/>
    </location>
</feature>
<feature type="modified residue" description="ADP-ribosylglycine" evidence="2">
    <location>
        <position position="76"/>
    </location>
</feature>
<feature type="modified residue" description="N6,N6,N6-trimethyllysine" evidence="1">
    <location>
        <position position="98"/>
    </location>
</feature>
<feature type="cross-link" description="Glycyl lysine isopeptide (Lys-Gly) (interchain with G-Cter in ubiquitin)" evidence="2">
    <location>
        <position position="6"/>
    </location>
</feature>
<feature type="cross-link" description="Glycyl lysine isopeptide (Lys-Gly) (interchain with G-Cter in ubiquitin)" evidence="2">
    <location>
        <position position="11"/>
    </location>
</feature>
<feature type="cross-link" description="Glycyl lysine isopeptide (Lys-Gly) (interchain with G-Cter in ubiquitin)" evidence="2">
    <location>
        <position position="27"/>
    </location>
</feature>
<feature type="cross-link" description="Glycyl lysine isopeptide (Lys-Gly) (interchain with G-Cter in ubiquitin)" evidence="2">
    <location>
        <position position="29"/>
    </location>
</feature>
<feature type="cross-link" description="Glycyl lysine isopeptide (Lys-Gly) (interchain with G-Cter in ubiquitin)" evidence="2">
    <location>
        <position position="33"/>
    </location>
</feature>
<feature type="cross-link" description="Glycyl lysine isopeptide (Lys-Gly) (interchain with G-Cter in ubiquitin)" evidence="2">
    <location>
        <position position="48"/>
    </location>
</feature>
<feature type="cross-link" description="Glycyl lysine isopeptide (Lys-Gly) (interchain with G-Cter in ubiquitin)" evidence="2">
    <location>
        <position position="63"/>
    </location>
</feature>
<feature type="cross-link" description="Glycyl lysine isopeptide (Gly-Lys) (interchain with K-? in acceptor proteins)" evidence="3">
    <location>
        <position position="76"/>
    </location>
</feature>
<proteinExistence type="evidence at protein level"/>
<comment type="function">
    <molecule>Ubiquitin</molecule>
    <text evidence="2">Exists either covalently attached to another protein, or free (unanchored). When covalently bound, it is conjugated to target proteins via an isopeptide bond either as a monomer (monoubiquitin), a polymer linked via different Lys residues of the ubiquitin (polyubiquitin chains) or a linear polymer linked via the initiator Met of the ubiquitin (linear polyubiquitin chains). Polyubiquitin chains, when attached to a target protein, have different functions depending on the Lys residue of the ubiquitin that is linked: Lys-6-linked may be involved in DNA repair; Lys-11-linked is involved in ERAD (endoplasmic reticulum-associated degradation) and in cell-cycle regulation; Lys-29-linked is involved in proteotoxic stress response and cell cycle; Lys-33-linked is involved in kinase modification; Lys-48-linked is involved in protein degradation via the proteasome; Lys-63-linked is involved in endocytosis, DNA-damage responses as well as in signaling processes leading to activation of the transcription factor NF-kappa-B. Linear polymer chains formed via attachment by the initiator Met lead to cell signaling. Ubiquitin is usually conjugated to Lys residues of target proteins, however, in rare cases, conjugation to Cys or Ser residues has been observed. When polyubiquitin is free (unanchored-polyubiquitin), it also has distinct roles, such as in activation of protein kinases, and in signaling.</text>
</comment>
<comment type="function">
    <molecule>Large ribosomal subunit protein eL40</molecule>
    <text evidence="2">Component of the 60S subunit of the ribosome. Ribosomal protein L40 is essential for translation of a subset of cellular transcripts, and especially for cap-dependent translation of vesicular stomatitis virus mRNAs.</text>
</comment>
<comment type="subunit">
    <text evidence="2 4 5">Ribosomal protein L40 is part of the 60S ribosomal subunit (PubMed:35709277, PubMed:36653451). Interacts with UBQLN1 (via UBA domain) (By similarity).</text>
</comment>
<comment type="subcellular location">
    <molecule>Ubiquitin</molecule>
    <subcellularLocation>
        <location evidence="2">Cytoplasm</location>
    </subcellularLocation>
    <subcellularLocation>
        <location evidence="2">Nucleus</location>
    </subcellularLocation>
</comment>
<comment type="subcellular location">
    <molecule>Large ribosomal subunit protein eL40</molecule>
    <subcellularLocation>
        <location evidence="4 5">Cytoplasm</location>
    </subcellularLocation>
</comment>
<comment type="PTM">
    <molecule>Ubiquitin</molecule>
    <text evidence="2">Phosphorylated at Ser-65 by PINK1 during mitophagy. Phosphorylated ubiquitin specifically binds and activates parkin (PRKN), triggering mitophagy. Phosphorylation does not affect E1-mediated E2 charging of ubiquitin but affects discharging of E2 enzymes to form polyubiquitin chains. It also affects deubiquitination by deubiquitinase enzymes such as USP30.</text>
</comment>
<comment type="PTM">
    <molecule>Ubiquitin</molecule>
    <text evidence="2">Mono-ADP-ribosylated at the C-terminus by PARP9, a component of the PPAR9-DTX3L complex. ADP-ribosylation requires processing by E1 and E2 enzymes and prevents ubiquitin conjugation to substrates such as histones.</text>
</comment>
<comment type="PTM">
    <molecule>Large ribosomal subunit protein eL40</molecule>
    <text evidence="2">Trimethylation of Lys-98 ('Lys-22' of the mature chain) by SMYD5 promotes translation elongation and protein synthesis.</text>
</comment>
<comment type="miscellaneous">
    <text evidence="2">Ubiquitin is encoded by 4 different genes. UBA52 and RPS27A genes code for a single copy of ubiquitin fused to the ribosomal proteins eL40 and eS31, respectively. UBB and UBC genes code for a polyubiquitin precursor with exact head to tail repeats, the number of repeats differ between species and strains.</text>
</comment>
<comment type="miscellaneous">
    <text evidence="2">For a better understanding, features related to ubiquitin are only indicated for the first chain.</text>
</comment>
<comment type="similarity">
    <text evidence="6">In the N-terminal section; belongs to the ubiquitin family.</text>
</comment>
<comment type="similarity">
    <text evidence="6">In the C-terminal section; belongs to the eukaryotic ribosomal protein eL40 family.</text>
</comment>
<keyword id="KW-0002">3D-structure</keyword>
<keyword id="KW-0013">ADP-ribosylation</keyword>
<keyword id="KW-0963">Cytoplasm</keyword>
<keyword id="KW-1017">Isopeptide bond</keyword>
<keyword id="KW-0488">Methylation</keyword>
<keyword id="KW-0539">Nucleus</keyword>
<keyword id="KW-0597">Phosphoprotein</keyword>
<keyword id="KW-1185">Reference proteome</keyword>
<keyword id="KW-0687">Ribonucleoprotein</keyword>
<keyword id="KW-0689">Ribosomal protein</keyword>
<keyword id="KW-0832">Ubl conjugation</keyword>